<name>PIF0_NPVAC</name>
<comment type="function">
    <text evidence="2 3 4">Plays an essential role for oral infectivity of occlusion-derived virus (ODV) and also functions in host midgut attachment and fusion by binding to a specific host receptor.</text>
</comment>
<comment type="subunit">
    <text evidence="5">Interacts with the PIF complex composed of PIF1, PIF2 and PIF3.</text>
</comment>
<comment type="subcellular location">
    <subcellularLocation>
        <location evidence="4">Secreted</location>
    </subcellularLocation>
    <subcellularLocation>
        <location evidence="6">Virion membrane</location>
        <topology evidence="1">Multi-pass membrane protein</topology>
    </subcellularLocation>
</comment>
<comment type="similarity">
    <text evidence="7">Belongs to the baculoviridae p74 family.</text>
</comment>
<dbReference type="EMBL" id="M31301">
    <property type="protein sequence ID" value="AAA46729.1"/>
    <property type="molecule type" value="Genomic_DNA"/>
</dbReference>
<dbReference type="EMBL" id="L22858">
    <property type="protein sequence ID" value="AAA66768.1"/>
    <property type="molecule type" value="Genomic_DNA"/>
</dbReference>
<dbReference type="PIR" id="A33750">
    <property type="entry name" value="WMNV74"/>
</dbReference>
<dbReference type="PIR" id="C72867">
    <property type="entry name" value="C72867"/>
</dbReference>
<dbReference type="KEGG" id="vg:1403971"/>
<dbReference type="OrthoDB" id="2848at10239"/>
<dbReference type="Proteomes" id="UP000008292">
    <property type="component" value="Segment"/>
</dbReference>
<dbReference type="GO" id="GO:0005576">
    <property type="term" value="C:extracellular region"/>
    <property type="evidence" value="ECO:0007669"/>
    <property type="project" value="UniProtKB-SubCell"/>
</dbReference>
<dbReference type="GO" id="GO:0016020">
    <property type="term" value="C:membrane"/>
    <property type="evidence" value="ECO:0007669"/>
    <property type="project" value="UniProtKB-KW"/>
</dbReference>
<dbReference type="GO" id="GO:0039679">
    <property type="term" value="C:viral occlusion body"/>
    <property type="evidence" value="ECO:0007669"/>
    <property type="project" value="UniProtKB-KW"/>
</dbReference>
<dbReference type="GO" id="GO:0055036">
    <property type="term" value="C:virion membrane"/>
    <property type="evidence" value="ECO:0007669"/>
    <property type="project" value="UniProtKB-SubCell"/>
</dbReference>
<dbReference type="GO" id="GO:0019058">
    <property type="term" value="P:viral life cycle"/>
    <property type="evidence" value="ECO:0007669"/>
    <property type="project" value="InterPro"/>
</dbReference>
<dbReference type="InterPro" id="IPR007663">
    <property type="entry name" value="Baculo_p74"/>
</dbReference>
<dbReference type="InterPro" id="IPR013613">
    <property type="entry name" value="Baculo_p74_N"/>
</dbReference>
<dbReference type="Pfam" id="PF04583">
    <property type="entry name" value="Baculo_p74"/>
    <property type="match status" value="1"/>
</dbReference>
<dbReference type="Pfam" id="PF08404">
    <property type="entry name" value="Baculo_p74_N"/>
    <property type="match status" value="1"/>
</dbReference>
<protein>
    <recommendedName>
        <fullName>Per os infectivity factor 0</fullName>
        <shortName>PIF0</shortName>
    </recommendedName>
</protein>
<proteinExistence type="evidence at protein level"/>
<reference key="1">
    <citation type="journal article" date="1989" name="Virology">
        <title>Identification of p74, a gene essential for virulence of baculovirus occlusion bodies.</title>
        <authorList>
            <person name="Kuzio J."/>
            <person name="Jaques R."/>
            <person name="Faulkner P."/>
        </authorList>
    </citation>
    <scope>NUCLEOTIDE SEQUENCE [GENOMIC DNA]</scope>
</reference>
<reference key="2">
    <citation type="journal article" date="1994" name="Virology">
        <title>The complete DNA sequence of Autographa californica nuclear polyhedrosis virus.</title>
        <authorList>
            <person name="Ayres M.D."/>
            <person name="Howard S.C."/>
            <person name="Kuzio J."/>
            <person name="Lopez-Ferber M."/>
            <person name="Possee R.D."/>
        </authorList>
    </citation>
    <scope>NUCLEOTIDE SEQUENCE [LARGE SCALE GENOMIC DNA]</scope>
    <source>
        <strain>C6</strain>
    </source>
</reference>
<reference key="3">
    <citation type="journal article" date="1997" name="J. Gen. Virol.">
        <title>Analysis of p74, a PDV envelope protein of Autographa californica nucleopolyhedrovirus required for occlusion body infectivity in vivo.</title>
        <authorList>
            <person name="Faulkner P."/>
            <person name="Kuzio J."/>
            <person name="Williams G.V."/>
            <person name="Wilson J.A."/>
        </authorList>
    </citation>
    <scope>SUBCELLULAR LOCATION</scope>
</reference>
<reference key="4">
    <citation type="journal article" date="2005" name="Virus Genes">
        <title>The function of envelope protein P74 from Autographa californica multiple nucleopolyhedrovirus in primary infection to host.</title>
        <authorList>
            <person name="Zhou W."/>
            <person name="Yao L."/>
            <person name="Xu H."/>
            <person name="Yan F."/>
            <person name="Qi Y."/>
        </authorList>
    </citation>
    <scope>FUNCTION</scope>
</reference>
<reference key="5">
    <citation type="journal article" date="2004" name="J. Virol.">
        <title>P74 mediates specific binding of Autographa californica M nucleopolyhedrovirus occlusion-derived virus to primary cellular targets in the midgut epithelia of Heliothis virescens Larvae.</title>
        <authorList>
            <person name="Haas-Stapleton E.J."/>
            <person name="Washburn J.O."/>
            <person name="Volkman L.E."/>
        </authorList>
    </citation>
    <scope>FUNCTION</scope>
</reference>
<reference key="6">
    <citation type="journal article" date="2010" name="J. Gen. Virol.">
        <title>A soluble form of P74 can act as a per os infectivity factor to the Autographa californica multiple nucleopolyhedrovirus.</title>
        <authorList>
            <person name="Slack J.M."/>
            <person name="Lawrence S.D."/>
            <person name="Krell P.J."/>
            <person name="Arif B.M."/>
        </authorList>
    </citation>
    <scope>FUNCTION</scope>
    <scope>SUBCELLULAR LOCATION</scope>
</reference>
<reference key="7">
    <citation type="journal article" date="2010" name="J. Virol.">
        <title>Baculovirus per os infectivity factors form a complex on the surface of occlusion-derived virus.</title>
        <authorList>
            <person name="Peng K."/>
            <person name="van Oers M.M."/>
            <person name="Hu Z."/>
            <person name="van Lent J.W."/>
            <person name="Vlak J.M."/>
        </authorList>
    </citation>
    <scope>INTERACTION WITH PIF1; PIF2 AND PIF3</scope>
</reference>
<gene>
    <name type="primary">P74</name>
</gene>
<evidence type="ECO:0000255" key="1"/>
<evidence type="ECO:0000269" key="2">
    <source>
    </source>
</evidence>
<evidence type="ECO:0000269" key="3">
    <source>
    </source>
</evidence>
<evidence type="ECO:0000269" key="4">
    <source>
    </source>
</evidence>
<evidence type="ECO:0000269" key="5">
    <source>
    </source>
</evidence>
<evidence type="ECO:0000269" key="6">
    <source>
    </source>
</evidence>
<evidence type="ECO:0000305" key="7"/>
<keyword id="KW-0472">Membrane</keyword>
<keyword id="KW-1185">Reference proteome</keyword>
<keyword id="KW-0964">Secreted</keyword>
<keyword id="KW-0812">Transmembrane</keyword>
<keyword id="KW-1133">Transmembrane helix</keyword>
<keyword id="KW-0842">Viral occlusion body</keyword>
<keyword id="KW-0946">Virion</keyword>
<keyword id="KW-0843">Virulence</keyword>
<organism>
    <name type="scientific">Autographa californica nuclear polyhedrosis virus</name>
    <name type="common">AcMNPV</name>
    <dbReference type="NCBI Taxonomy" id="46015"/>
    <lineage>
        <taxon>Viruses</taxon>
        <taxon>Viruses incertae sedis</taxon>
        <taxon>Naldaviricetes</taxon>
        <taxon>Lefavirales</taxon>
        <taxon>Baculoviridae</taxon>
        <taxon>Alphabaculovirus</taxon>
        <taxon>Alphabaculovirus aucalifornicae</taxon>
    </lineage>
</organism>
<feature type="chain" id="PRO_0000132916" description="Per os infectivity factor 0">
    <location>
        <begin position="1"/>
        <end position="645"/>
    </location>
</feature>
<feature type="transmembrane region" description="Helical" evidence="1">
    <location>
        <begin position="437"/>
        <end position="457"/>
    </location>
</feature>
<feature type="transmembrane region" description="Helical" evidence="1">
    <location>
        <begin position="590"/>
        <end position="610"/>
    </location>
</feature>
<feature type="transmembrane region" description="Helical" evidence="1">
    <location>
        <begin position="611"/>
        <end position="631"/>
    </location>
</feature>
<feature type="sequence conflict" description="In Ref. 1; AAA46729." evidence="7" ref="1">
    <original>V</original>
    <variation>E</variation>
    <location>
        <position position="73"/>
    </location>
</feature>
<feature type="sequence conflict" description="In Ref. 1; AAA46729." evidence="7" ref="1">
    <original>M</original>
    <variation>T</variation>
    <location>
        <position position="95"/>
    </location>
</feature>
<feature type="sequence conflict" description="In Ref. 1; AAA46729." evidence="7" ref="1">
    <original>L</original>
    <variation>M</variation>
    <location>
        <position position="593"/>
    </location>
</feature>
<organismHost>
    <name type="scientific">Lepidoptera</name>
    <name type="common">butterflies and moths</name>
    <dbReference type="NCBI Taxonomy" id="7088"/>
</organismHost>
<accession>P15963</accession>
<sequence length="645" mass="73885">MAVLTAVDLTNASRYAIHMHRLEFISRWRTRFPHILIDYTLRPASSDDDYYVPPKLADKALAVKLAFSKRGCVSMSCYPFHETGVVSNTTPFMYMQTSETSVGYAQPACYHLDRAAAMREGAETQVQSAEFRYTLDNKCILVDSLSKMYFNSPYLRTEEHTIMGVDDVPAFNVRPDPDPLFPERFKGEFNEAYCRRFGRELFNGGCSFRWWESLIGFVLGDTIFVTFKMLANNIFSELRDFDYKAPSSILPPRPNVDSNAILAQWRSVRDNATDLEFEKLFNKNPTLNDLGMIVNGSPVQITYTAETGFTKTPIAYNYRGNERARVEHFEALDRSISDQDLESIITSFLEDYALVFGIATDIGFDMLMSGFKSMLKKINTSLIPAMKHMLLSTTRRVTVRMLGETYKAALVHSLNVIAIKTLTVTAKALTRIAIQASSIVGIVLILLTLADLVLALWDPFGYNNMFPREFPDDMSRTFLTAYFESFDNTTSREIIEFMPEFFSEMVETDDDATFESLFHLLDYVASLEVNSDGQMLNLEEGDEIEDFDESTLVGQALATSSLYTRMEFMQYTFRQNTLLSMNKENNNFNQIILGLFATNTIVAFTAFVIHTELIFFIFFVIFLMITFYYIIKESYEYYKTIDLLF</sequence>